<reference key="1">
    <citation type="journal article" date="2004" name="Nat. Genet.">
        <title>Complete sequencing and characterization of 21,243 full-length human cDNAs.</title>
        <authorList>
            <person name="Ota T."/>
            <person name="Suzuki Y."/>
            <person name="Nishikawa T."/>
            <person name="Otsuki T."/>
            <person name="Sugiyama T."/>
            <person name="Irie R."/>
            <person name="Wakamatsu A."/>
            <person name="Hayashi K."/>
            <person name="Sato H."/>
            <person name="Nagai K."/>
            <person name="Kimura K."/>
            <person name="Makita H."/>
            <person name="Sekine M."/>
            <person name="Obayashi M."/>
            <person name="Nishi T."/>
            <person name="Shibahara T."/>
            <person name="Tanaka T."/>
            <person name="Ishii S."/>
            <person name="Yamamoto J."/>
            <person name="Saito K."/>
            <person name="Kawai Y."/>
            <person name="Isono Y."/>
            <person name="Nakamura Y."/>
            <person name="Nagahari K."/>
            <person name="Murakami K."/>
            <person name="Yasuda T."/>
            <person name="Iwayanagi T."/>
            <person name="Wagatsuma M."/>
            <person name="Shiratori A."/>
            <person name="Sudo H."/>
            <person name="Hosoiri T."/>
            <person name="Kaku Y."/>
            <person name="Kodaira H."/>
            <person name="Kondo H."/>
            <person name="Sugawara M."/>
            <person name="Takahashi M."/>
            <person name="Kanda K."/>
            <person name="Yokoi T."/>
            <person name="Furuya T."/>
            <person name="Kikkawa E."/>
            <person name="Omura Y."/>
            <person name="Abe K."/>
            <person name="Kamihara K."/>
            <person name="Katsuta N."/>
            <person name="Sato K."/>
            <person name="Tanikawa M."/>
            <person name="Yamazaki M."/>
            <person name="Ninomiya K."/>
            <person name="Ishibashi T."/>
            <person name="Yamashita H."/>
            <person name="Murakawa K."/>
            <person name="Fujimori K."/>
            <person name="Tanai H."/>
            <person name="Kimata M."/>
            <person name="Watanabe M."/>
            <person name="Hiraoka S."/>
            <person name="Chiba Y."/>
            <person name="Ishida S."/>
            <person name="Ono Y."/>
            <person name="Takiguchi S."/>
            <person name="Watanabe S."/>
            <person name="Yosida M."/>
            <person name="Hotuta T."/>
            <person name="Kusano J."/>
            <person name="Kanehori K."/>
            <person name="Takahashi-Fujii A."/>
            <person name="Hara H."/>
            <person name="Tanase T.-O."/>
            <person name="Nomura Y."/>
            <person name="Togiya S."/>
            <person name="Komai F."/>
            <person name="Hara R."/>
            <person name="Takeuchi K."/>
            <person name="Arita M."/>
            <person name="Imose N."/>
            <person name="Musashino K."/>
            <person name="Yuuki H."/>
            <person name="Oshima A."/>
            <person name="Sasaki N."/>
            <person name="Aotsuka S."/>
            <person name="Yoshikawa Y."/>
            <person name="Matsunawa H."/>
            <person name="Ichihara T."/>
            <person name="Shiohata N."/>
            <person name="Sano S."/>
            <person name="Moriya S."/>
            <person name="Momiyama H."/>
            <person name="Satoh N."/>
            <person name="Takami S."/>
            <person name="Terashima Y."/>
            <person name="Suzuki O."/>
            <person name="Nakagawa S."/>
            <person name="Senoh A."/>
            <person name="Mizoguchi H."/>
            <person name="Goto Y."/>
            <person name="Shimizu F."/>
            <person name="Wakebe H."/>
            <person name="Hishigaki H."/>
            <person name="Watanabe T."/>
            <person name="Sugiyama A."/>
            <person name="Takemoto M."/>
            <person name="Kawakami B."/>
            <person name="Yamazaki M."/>
            <person name="Watanabe K."/>
            <person name="Kumagai A."/>
            <person name="Itakura S."/>
            <person name="Fukuzumi Y."/>
            <person name="Fujimori Y."/>
            <person name="Komiyama M."/>
            <person name="Tashiro H."/>
            <person name="Tanigami A."/>
            <person name="Fujiwara T."/>
            <person name="Ono T."/>
            <person name="Yamada K."/>
            <person name="Fujii Y."/>
            <person name="Ozaki K."/>
            <person name="Hirao M."/>
            <person name="Ohmori Y."/>
            <person name="Kawabata A."/>
            <person name="Hikiji T."/>
            <person name="Kobatake N."/>
            <person name="Inagaki H."/>
            <person name="Ikema Y."/>
            <person name="Okamoto S."/>
            <person name="Okitani R."/>
            <person name="Kawakami T."/>
            <person name="Noguchi S."/>
            <person name="Itoh T."/>
            <person name="Shigeta K."/>
            <person name="Senba T."/>
            <person name="Matsumura K."/>
            <person name="Nakajima Y."/>
            <person name="Mizuno T."/>
            <person name="Morinaga M."/>
            <person name="Sasaki M."/>
            <person name="Togashi T."/>
            <person name="Oyama M."/>
            <person name="Hata H."/>
            <person name="Watanabe M."/>
            <person name="Komatsu T."/>
            <person name="Mizushima-Sugano J."/>
            <person name="Satoh T."/>
            <person name="Shirai Y."/>
            <person name="Takahashi Y."/>
            <person name="Nakagawa K."/>
            <person name="Okumura K."/>
            <person name="Nagase T."/>
            <person name="Nomura N."/>
            <person name="Kikuchi H."/>
            <person name="Masuho Y."/>
            <person name="Yamashita R."/>
            <person name="Nakai K."/>
            <person name="Yada T."/>
            <person name="Nakamura Y."/>
            <person name="Ohara O."/>
            <person name="Isogai T."/>
            <person name="Sugano S."/>
        </authorList>
    </citation>
    <scope>NUCLEOTIDE SEQUENCE [LARGE SCALE MRNA]</scope>
    <source>
        <tissue>Trachea</tissue>
    </source>
</reference>
<reference key="2">
    <citation type="journal article" date="1999" name="Nature">
        <title>The DNA sequence of human chromosome 22.</title>
        <authorList>
            <person name="Dunham I."/>
            <person name="Hunt A.R."/>
            <person name="Collins J.E."/>
            <person name="Bruskiewich R."/>
            <person name="Beare D.M."/>
            <person name="Clamp M."/>
            <person name="Smink L.J."/>
            <person name="Ainscough R."/>
            <person name="Almeida J.P."/>
            <person name="Babbage A.K."/>
            <person name="Bagguley C."/>
            <person name="Bailey J."/>
            <person name="Barlow K.F."/>
            <person name="Bates K.N."/>
            <person name="Beasley O.P."/>
            <person name="Bird C.P."/>
            <person name="Blakey S.E."/>
            <person name="Bridgeman A.M."/>
            <person name="Buck D."/>
            <person name="Burgess J."/>
            <person name="Burrill W.D."/>
            <person name="Burton J."/>
            <person name="Carder C."/>
            <person name="Carter N.P."/>
            <person name="Chen Y."/>
            <person name="Clark G."/>
            <person name="Clegg S.M."/>
            <person name="Cobley V.E."/>
            <person name="Cole C.G."/>
            <person name="Collier R.E."/>
            <person name="Connor R."/>
            <person name="Conroy D."/>
            <person name="Corby N.R."/>
            <person name="Coville G.J."/>
            <person name="Cox A.V."/>
            <person name="Davis J."/>
            <person name="Dawson E."/>
            <person name="Dhami P.D."/>
            <person name="Dockree C."/>
            <person name="Dodsworth S.J."/>
            <person name="Durbin R.M."/>
            <person name="Ellington A.G."/>
            <person name="Evans K.L."/>
            <person name="Fey J.M."/>
            <person name="Fleming K."/>
            <person name="French L."/>
            <person name="Garner A.A."/>
            <person name="Gilbert J.G.R."/>
            <person name="Goward M.E."/>
            <person name="Grafham D.V."/>
            <person name="Griffiths M.N.D."/>
            <person name="Hall C."/>
            <person name="Hall R.E."/>
            <person name="Hall-Tamlyn G."/>
            <person name="Heathcott R.W."/>
            <person name="Ho S."/>
            <person name="Holmes S."/>
            <person name="Hunt S.E."/>
            <person name="Jones M.C."/>
            <person name="Kershaw J."/>
            <person name="Kimberley A.M."/>
            <person name="King A."/>
            <person name="Laird G.K."/>
            <person name="Langford C.F."/>
            <person name="Leversha M.A."/>
            <person name="Lloyd C."/>
            <person name="Lloyd D.M."/>
            <person name="Martyn I.D."/>
            <person name="Mashreghi-Mohammadi M."/>
            <person name="Matthews L.H."/>
            <person name="Mccann O.T."/>
            <person name="Mcclay J."/>
            <person name="Mclaren S."/>
            <person name="McMurray A.A."/>
            <person name="Milne S.A."/>
            <person name="Mortimore B.J."/>
            <person name="Odell C.N."/>
            <person name="Pavitt R."/>
            <person name="Pearce A.V."/>
            <person name="Pearson D."/>
            <person name="Phillimore B.J.C.T."/>
            <person name="Phillips S.H."/>
            <person name="Plumb R.W."/>
            <person name="Ramsay H."/>
            <person name="Ramsey Y."/>
            <person name="Rogers L."/>
            <person name="Ross M.T."/>
            <person name="Scott C.E."/>
            <person name="Sehra H.K."/>
            <person name="Skuce C.D."/>
            <person name="Smalley S."/>
            <person name="Smith M.L."/>
            <person name="Soderlund C."/>
            <person name="Spragon L."/>
            <person name="Steward C.A."/>
            <person name="Sulston J.E."/>
            <person name="Swann R.M."/>
            <person name="Vaudin M."/>
            <person name="Wall M."/>
            <person name="Wallis J.M."/>
            <person name="Whiteley M.N."/>
            <person name="Willey D.L."/>
            <person name="Williams L."/>
            <person name="Williams S.A."/>
            <person name="Williamson H."/>
            <person name="Wilmer T.E."/>
            <person name="Wilming L."/>
            <person name="Wright C.L."/>
            <person name="Hubbard T."/>
            <person name="Bentley D.R."/>
            <person name="Beck S."/>
            <person name="Rogers J."/>
            <person name="Shimizu N."/>
            <person name="Minoshima S."/>
            <person name="Kawasaki K."/>
            <person name="Sasaki T."/>
            <person name="Asakawa S."/>
            <person name="Kudoh J."/>
            <person name="Shintani A."/>
            <person name="Shibuya K."/>
            <person name="Yoshizaki Y."/>
            <person name="Aoki N."/>
            <person name="Mitsuyama S."/>
            <person name="Roe B.A."/>
            <person name="Chen F."/>
            <person name="Chu L."/>
            <person name="Crabtree J."/>
            <person name="Deschamps S."/>
            <person name="Do A."/>
            <person name="Do T."/>
            <person name="Dorman A."/>
            <person name="Fang F."/>
            <person name="Fu Y."/>
            <person name="Hu P."/>
            <person name="Hua A."/>
            <person name="Kenton S."/>
            <person name="Lai H."/>
            <person name="Lao H.I."/>
            <person name="Lewis J."/>
            <person name="Lewis S."/>
            <person name="Lin S.-P."/>
            <person name="Loh P."/>
            <person name="Malaj E."/>
            <person name="Nguyen T."/>
            <person name="Pan H."/>
            <person name="Phan S."/>
            <person name="Qi S."/>
            <person name="Qian Y."/>
            <person name="Ray L."/>
            <person name="Ren Q."/>
            <person name="Shaull S."/>
            <person name="Sloan D."/>
            <person name="Song L."/>
            <person name="Wang Q."/>
            <person name="Wang Y."/>
            <person name="Wang Z."/>
            <person name="White J."/>
            <person name="Willingham D."/>
            <person name="Wu H."/>
            <person name="Yao Z."/>
            <person name="Zhan M."/>
            <person name="Zhang G."/>
            <person name="Chissoe S."/>
            <person name="Murray J."/>
            <person name="Miller N."/>
            <person name="Minx P."/>
            <person name="Fulton R."/>
            <person name="Johnson D."/>
            <person name="Bemis G."/>
            <person name="Bentley D."/>
            <person name="Bradshaw H."/>
            <person name="Bourne S."/>
            <person name="Cordes M."/>
            <person name="Du Z."/>
            <person name="Fulton L."/>
            <person name="Goela D."/>
            <person name="Graves T."/>
            <person name="Hawkins J."/>
            <person name="Hinds K."/>
            <person name="Kemp K."/>
            <person name="Latreille P."/>
            <person name="Layman D."/>
            <person name="Ozersky P."/>
            <person name="Rohlfing T."/>
            <person name="Scheet P."/>
            <person name="Walker C."/>
            <person name="Wamsley A."/>
            <person name="Wohldmann P."/>
            <person name="Pepin K."/>
            <person name="Nelson J."/>
            <person name="Korf I."/>
            <person name="Bedell J.A."/>
            <person name="Hillier L.W."/>
            <person name="Mardis E."/>
            <person name="Waterston R."/>
            <person name="Wilson R."/>
            <person name="Emanuel B.S."/>
            <person name="Shaikh T."/>
            <person name="Kurahashi H."/>
            <person name="Saitta S."/>
            <person name="Budarf M.L."/>
            <person name="McDermid H.E."/>
            <person name="Johnson A."/>
            <person name="Wong A.C.C."/>
            <person name="Morrow B.E."/>
            <person name="Edelmann L."/>
            <person name="Kim U.J."/>
            <person name="Shizuya H."/>
            <person name="Simon M.I."/>
            <person name="Dumanski J.P."/>
            <person name="Peyrard M."/>
            <person name="Kedra D."/>
            <person name="Seroussi E."/>
            <person name="Fransson I."/>
            <person name="Tapia I."/>
            <person name="Bruder C.E."/>
            <person name="O'Brien K.P."/>
            <person name="Wilkinson P."/>
            <person name="Bodenteich A."/>
            <person name="Hartman K."/>
            <person name="Hu X."/>
            <person name="Khan A.S."/>
            <person name="Lane L."/>
            <person name="Tilahun Y."/>
            <person name="Wright H."/>
        </authorList>
    </citation>
    <scope>NUCLEOTIDE SEQUENCE [LARGE SCALE GENOMIC DNA]</scope>
</reference>
<reference key="3">
    <citation type="journal article" date="2004" name="Genome Res.">
        <title>The status, quality, and expansion of the NIH full-length cDNA project: the Mammalian Gene Collection (MGC).</title>
        <authorList>
            <consortium name="The MGC Project Team"/>
        </authorList>
    </citation>
    <scope>NUCLEOTIDE SEQUENCE [LARGE SCALE MRNA]</scope>
    <source>
        <tissue>Lung</tissue>
    </source>
</reference>
<reference key="4">
    <citation type="thesis" date="2000" institute="University of Paris XI" country="France">
        <title>RoXaN: a tetratricopeptide cellular protein interacting with rotavirus non-structural protein NSP3.</title>
        <authorList>
            <person name="Lindenbaum P."/>
        </authorList>
    </citation>
    <scope>NUCLEOTIDE SEQUENCE [MRNA] OF 1-764</scope>
    <scope>INTERACTION WITH ROTAVIRUS A NSP3 (MICROBIAL INFECTION)</scope>
</reference>
<reference key="5">
    <citation type="journal article" date="1999" name="DNA Res.">
        <title>Prediction of the coding sequences of unidentified human genes. XIV. The complete sequences of 100 new cDNA clones from brain which code for large proteins in vitro.</title>
        <authorList>
            <person name="Kikuno R."/>
            <person name="Nagase T."/>
            <person name="Ishikawa K."/>
            <person name="Hirosawa M."/>
            <person name="Miyajima N."/>
            <person name="Tanaka A."/>
            <person name="Kotani H."/>
            <person name="Nomura N."/>
            <person name="Ohara O."/>
        </authorList>
    </citation>
    <scope>NUCLEOTIDE SEQUENCE [LARGE SCALE MRNA] OF 38-977</scope>
    <source>
        <tissue>Brain</tissue>
    </source>
</reference>
<reference key="6">
    <citation type="journal article" date="2004" name="J. Virol.">
        <title>RoXaN, a novel cellular protein containing TPR, LD, and zinc finger motifs, forms a ternary complex with eukaryotic initiation factor 4G and rotavirus NSP3.</title>
        <authorList>
            <person name="Vitour D."/>
            <person name="Lindenbaum P."/>
            <person name="Vende P."/>
            <person name="Becker M.M."/>
            <person name="Poncet D."/>
        </authorList>
    </citation>
    <scope>INTERACTION WITH ROTAVIRUS A NSP3 (MICROBIAL INFECTION)</scope>
    <scope>MUTAGENESIS OF 241-ASP--SER-243 AND 252-LEU--ASP-254</scope>
</reference>
<reference key="7">
    <citation type="journal article" date="2008" name="J. Virol.">
        <title>Nuclear localization of cytoplasmic poly(A)-binding protein upon rotavirus infection involves the interaction of NSP3 with eIF4G and RoXaN.</title>
        <authorList>
            <person name="Harb M."/>
            <person name="Becker M.M."/>
            <person name="Vitour D."/>
            <person name="Baron C.H."/>
            <person name="Vende P."/>
            <person name="Brown S.C."/>
            <person name="Bolte S."/>
            <person name="Arold S.T."/>
            <person name="Poncet D."/>
        </authorList>
    </citation>
    <scope>SUBCELLULAR LOCATION</scope>
    <scope>INTERACTION WITH ROTAVIRUS A NSP3 (MICROBIAL INFECTION)</scope>
</reference>
<reference key="8">
    <citation type="journal article" date="2009" name="Sci. Signal.">
        <title>Quantitative phosphoproteomic analysis of T cell receptor signaling reveals system-wide modulation of protein-protein interactions.</title>
        <authorList>
            <person name="Mayya V."/>
            <person name="Lundgren D.H."/>
            <person name="Hwang S.-I."/>
            <person name="Rezaul K."/>
            <person name="Wu L."/>
            <person name="Eng J.K."/>
            <person name="Rodionov V."/>
            <person name="Han D.K."/>
        </authorList>
    </citation>
    <scope>PHOSPHORYLATION [LARGE SCALE ANALYSIS] AT SER-217</scope>
    <scope>IDENTIFICATION BY MASS SPECTROMETRY [LARGE SCALE ANALYSIS]</scope>
    <source>
        <tissue>Leukemic T-cell</tissue>
    </source>
</reference>
<reference key="9">
    <citation type="journal article" date="2010" name="Sci. Signal.">
        <title>Quantitative phosphoproteomics reveals widespread full phosphorylation site occupancy during mitosis.</title>
        <authorList>
            <person name="Olsen J.V."/>
            <person name="Vermeulen M."/>
            <person name="Santamaria A."/>
            <person name="Kumar C."/>
            <person name="Miller M.L."/>
            <person name="Jensen L.J."/>
            <person name="Gnad F."/>
            <person name="Cox J."/>
            <person name="Jensen T.S."/>
            <person name="Nigg E.A."/>
            <person name="Brunak S."/>
            <person name="Mann M."/>
        </authorList>
    </citation>
    <scope>PHOSPHORYLATION [LARGE SCALE ANALYSIS] AT SER-217</scope>
    <scope>IDENTIFICATION BY MASS SPECTROMETRY [LARGE SCALE ANALYSIS]</scope>
    <source>
        <tissue>Cervix carcinoma</tissue>
    </source>
</reference>
<reference key="10">
    <citation type="journal article" date="2011" name="BMC Syst. Biol.">
        <title>Initial characterization of the human central proteome.</title>
        <authorList>
            <person name="Burkard T.R."/>
            <person name="Planyavsky M."/>
            <person name="Kaupe I."/>
            <person name="Breitwieser F.P."/>
            <person name="Buerckstuemmer T."/>
            <person name="Bennett K.L."/>
            <person name="Superti-Furga G."/>
            <person name="Colinge J."/>
        </authorList>
    </citation>
    <scope>IDENTIFICATION BY MASS SPECTROMETRY [LARGE SCALE ANALYSIS]</scope>
</reference>
<reference key="11">
    <citation type="journal article" date="2011" name="Sci. Signal.">
        <title>System-wide temporal characterization of the proteome and phosphoproteome of human embryonic stem cell differentiation.</title>
        <authorList>
            <person name="Rigbolt K.T."/>
            <person name="Prokhorova T.A."/>
            <person name="Akimov V."/>
            <person name="Henningsen J."/>
            <person name="Johansen P.T."/>
            <person name="Kratchmarova I."/>
            <person name="Kassem M."/>
            <person name="Mann M."/>
            <person name="Olsen J.V."/>
            <person name="Blagoev B."/>
        </authorList>
    </citation>
    <scope>IDENTIFICATION BY MASS SPECTROMETRY [LARGE SCALE ANALYSIS]</scope>
</reference>
<reference key="12">
    <citation type="journal article" date="2013" name="J. Proteome Res.">
        <title>Toward a comprehensive characterization of a human cancer cell phosphoproteome.</title>
        <authorList>
            <person name="Zhou H."/>
            <person name="Di Palma S."/>
            <person name="Preisinger C."/>
            <person name="Peng M."/>
            <person name="Polat A.N."/>
            <person name="Heck A.J."/>
            <person name="Mohammed S."/>
        </authorList>
    </citation>
    <scope>PHOSPHORYLATION [LARGE SCALE ANALYSIS] AT SER-364 AND SER-367</scope>
    <scope>IDENTIFICATION BY MASS SPECTROMETRY [LARGE SCALE ANALYSIS]</scope>
    <source>
        <tissue>Cervix carcinoma</tissue>
        <tissue>Erythroleukemia</tissue>
    </source>
</reference>
<reference key="13">
    <citation type="journal article" date="2014" name="J. Proteomics">
        <title>An enzyme assisted RP-RPLC approach for in-depth analysis of human liver phosphoproteome.</title>
        <authorList>
            <person name="Bian Y."/>
            <person name="Song C."/>
            <person name="Cheng K."/>
            <person name="Dong M."/>
            <person name="Wang F."/>
            <person name="Huang J."/>
            <person name="Sun D."/>
            <person name="Wang L."/>
            <person name="Ye M."/>
            <person name="Zou H."/>
        </authorList>
    </citation>
    <scope>PHOSPHORYLATION [LARGE SCALE ANALYSIS] AT SER-364</scope>
    <scope>IDENTIFICATION BY MASS SPECTROMETRY [LARGE SCALE ANALYSIS]</scope>
    <source>
        <tissue>Liver</tissue>
    </source>
</reference>
<reference key="14">
    <citation type="journal article" date="2017" name="Mol. Cell">
        <title>A Compendium of RNA-Binding Proteins that Regulate MicroRNA Biogenesis.</title>
        <authorList>
            <person name="Treiber T."/>
            <person name="Treiber N."/>
            <person name="Plessmann U."/>
            <person name="Harlander S."/>
            <person name="Daiss J.L."/>
            <person name="Eichner N."/>
            <person name="Lehmann G."/>
            <person name="Schall K."/>
            <person name="Urlaub H."/>
            <person name="Meister G."/>
        </authorList>
    </citation>
    <scope>FUNCTION</scope>
    <scope>MIRNA-BINDING</scope>
</reference>
<accession>Q9UGR2</accession>
<accession>A7YY88</accession>
<accession>B2RCA4</accession>
<accession>Q5TFX9</accession>
<accession>Q8TBT9</accession>
<accession>Q9H8B6</accession>
<accession>Q9UGQ9</accession>
<accession>Q9UGR0</accession>
<accession>Q9UGR1</accession>
<accession>Q9UK03</accession>
<accession>Q9UPW9</accession>
<protein>
    <recommendedName>
        <fullName>Zinc finger CCCH domain-containing protein 7B</fullName>
    </recommendedName>
    <alternativeName>
        <fullName>Rotavirus 'X'-associated non-structural protein</fullName>
        <shortName>RoXaN</shortName>
    </alternativeName>
</protein>
<proteinExistence type="evidence at protein level"/>
<evidence type="ECO:0000255" key="1"/>
<evidence type="ECO:0000255" key="2">
    <source>
        <dbReference type="PROSITE-ProRule" id="PRU00042"/>
    </source>
</evidence>
<evidence type="ECO:0000255" key="3">
    <source>
        <dbReference type="PROSITE-ProRule" id="PRU00339"/>
    </source>
</evidence>
<evidence type="ECO:0000255" key="4">
    <source>
        <dbReference type="PROSITE-ProRule" id="PRU00723"/>
    </source>
</evidence>
<evidence type="ECO:0000256" key="5">
    <source>
        <dbReference type="SAM" id="MobiDB-lite"/>
    </source>
</evidence>
<evidence type="ECO:0000269" key="6">
    <source>
    </source>
</evidence>
<evidence type="ECO:0000269" key="7">
    <source>
    </source>
</evidence>
<evidence type="ECO:0000269" key="8">
    <source>
    </source>
</evidence>
<evidence type="ECO:0000269" key="9">
    <source ref="4"/>
</evidence>
<evidence type="ECO:0000305" key="10"/>
<evidence type="ECO:0007744" key="11">
    <source>
    </source>
</evidence>
<evidence type="ECO:0007744" key="12">
    <source>
    </source>
</evidence>
<evidence type="ECO:0007744" key="13">
    <source>
    </source>
</evidence>
<evidence type="ECO:0007744" key="14">
    <source>
    </source>
</evidence>
<sequence length="977" mass="109858">MERQKRKADIEKGLQFIQSTLPLKQEEYEAFLLKLVQNLFAEGNDLFREKDYKQALVQYMEGLNVADYAASDQVALPRELLCKLHVNRAACYFTMGLYEKALEDSEKALGLDSESIRALFRKARALNELGRHKEAYECSSRCSLALPHDESVTQLGQELAQKLGLRVRKAYKRPQELETFSLLSNGTAAGVADQGTSNGLGSIDDIETDCYVDPRGSPALLPSTPTMPLFPHVLDLLAPLDSSRTLPSTDSLDDFSDGDVFGPELDTLLDSLSLVQGGLSGSGVPSELPQLIPVFPGGTPLLPPVVGGSIPVSSPLPPASFGLVMDPSKKLAASVLDALDPPGPTLDPLDLLPYSETRLDALDSFGSTRGSLDKPDSFMEETNSQDHRPPSGAQKPAPSPEPCMPNTALLIKNPLAATHEFKQACQLCYPKTGPRAGDYTYREGLEHKCKRDILLGRLRSSEDQTWKRIRPRPTKTSFVGSYYLCKDMINKQDCKYGDNCTFAYHQEEIDVWTEERKGTLNRDLLFDPLGGVKRGSLTIAKLLKEHQGIFTFLCEICFDSKPRIISKGTKDSPSVCSNLAAKHSFYNNKCLVHIVRSTSLKYSKIRQFQEHFQFDVCRHEVRYGCLREDSCHFAHSFIELKVWLLQQYSGMTHEDIVQESKKYWQQMEAHAGKASSSMGAPRTHGPSTFDLQMKFVCGQCWRNGQVVEPDKDLKYCSAKARHCWTKERRVLLVMSKAKRKWVSVRPLPSIRNFPQQYDLCIHAQNGRKCQYVGNCSFAHSPEERDMWTFMKENKILDMQQTYDMWLKKHNPGKPGEGTPISSREGEKQIQMPTDYADIMMGYHCWLCGKNSNSKKQWQQHIQSEKHKEKVFTSDSDASGWAFRFPMGEFRLCDRLQKGKACPDGDKCRCAHGQEELNEWLDRREVLKQKLAKARKDMLLCPRDDDFGKYNFLLQEDGDLAGATPEAPAAAATATTGE</sequence>
<keyword id="KW-0945">Host-virus interaction</keyword>
<keyword id="KW-0479">Metal-binding</keyword>
<keyword id="KW-0539">Nucleus</keyword>
<keyword id="KW-0597">Phosphoprotein</keyword>
<keyword id="KW-1267">Proteomics identification</keyword>
<keyword id="KW-1185">Reference proteome</keyword>
<keyword id="KW-0677">Repeat</keyword>
<keyword id="KW-0802">TPR repeat</keyword>
<keyword id="KW-0862">Zinc</keyword>
<keyword id="KW-0863">Zinc-finger</keyword>
<organism>
    <name type="scientific">Homo sapiens</name>
    <name type="common">Human</name>
    <dbReference type="NCBI Taxonomy" id="9606"/>
    <lineage>
        <taxon>Eukaryota</taxon>
        <taxon>Metazoa</taxon>
        <taxon>Chordata</taxon>
        <taxon>Craniata</taxon>
        <taxon>Vertebrata</taxon>
        <taxon>Euteleostomi</taxon>
        <taxon>Mammalia</taxon>
        <taxon>Eutheria</taxon>
        <taxon>Euarchontoglires</taxon>
        <taxon>Primates</taxon>
        <taxon>Haplorrhini</taxon>
        <taxon>Catarrhini</taxon>
        <taxon>Hominidae</taxon>
        <taxon>Homo</taxon>
    </lineage>
</organism>
<comment type="function">
    <text evidence="8">May be a specific regulator of miRNA biogenesis. Binds to microRNAs MIR7-1, MIR16-2 and MIR29A hairpins recognizing the 'ATA(A/T)' motif in the apical loop.</text>
</comment>
<comment type="subunit">
    <text evidence="6 9">(Microbial infection) Interacts (via LD motif) with rotavirus A NSP3 (via the coiled-coil region).</text>
</comment>
<comment type="interaction">
    <interactant intactId="EBI-948845">
        <id>Q9UGR2</id>
    </interactant>
    <interactant intactId="EBI-1263962">
        <id>Q00721</id>
    </interactant>
    <organismsDiffer>true</organismsDiffer>
    <experiments>6</experiments>
</comment>
<comment type="subcellular location">
    <subcellularLocation>
        <location evidence="7">Nucleus</location>
    </subcellularLocation>
    <text>Nuclear localization seems to be depleted upon rotavirus A infection.</text>
</comment>
<dbReference type="EMBL" id="AK315009">
    <property type="protein sequence ID" value="BAG37501.1"/>
    <property type="molecule type" value="mRNA"/>
</dbReference>
<dbReference type="EMBL" id="AL035659">
    <property type="status" value="NOT_ANNOTATED_CDS"/>
    <property type="molecule type" value="Genomic_DNA"/>
</dbReference>
<dbReference type="EMBL" id="BC024313">
    <property type="protein sequence ID" value="AAH24313.2"/>
    <property type="molecule type" value="mRNA"/>
</dbReference>
<dbReference type="EMBL" id="BC152558">
    <property type="protein sequence ID" value="AAI52559.1"/>
    <property type="molecule type" value="mRNA"/>
</dbReference>
<dbReference type="EMBL" id="AF188530">
    <property type="protein sequence ID" value="AAF05541.1"/>
    <property type="molecule type" value="mRNA"/>
</dbReference>
<dbReference type="EMBL" id="AB028954">
    <property type="protein sequence ID" value="BAA82983.1"/>
    <property type="molecule type" value="mRNA"/>
</dbReference>
<dbReference type="CCDS" id="CCDS14013.1"/>
<dbReference type="RefSeq" id="NP_060060.3">
    <property type="nucleotide sequence ID" value="NM_017590.5"/>
</dbReference>
<dbReference type="SMR" id="Q9UGR2"/>
<dbReference type="BioGRID" id="116866">
    <property type="interactions" value="57"/>
</dbReference>
<dbReference type="FunCoup" id="Q9UGR2">
    <property type="interactions" value="881"/>
</dbReference>
<dbReference type="IntAct" id="Q9UGR2">
    <property type="interactions" value="23"/>
</dbReference>
<dbReference type="MINT" id="Q9UGR2"/>
<dbReference type="STRING" id="9606.ENSP00000345793"/>
<dbReference type="GlyGen" id="Q9UGR2">
    <property type="glycosylation" value="1 site, 1 O-linked glycan (1 site)"/>
</dbReference>
<dbReference type="iPTMnet" id="Q9UGR2"/>
<dbReference type="PhosphoSitePlus" id="Q9UGR2"/>
<dbReference type="SwissPalm" id="Q9UGR2"/>
<dbReference type="BioMuta" id="ZC3H7B"/>
<dbReference type="DMDM" id="20455239"/>
<dbReference type="jPOST" id="Q9UGR2"/>
<dbReference type="MassIVE" id="Q9UGR2"/>
<dbReference type="PaxDb" id="9606-ENSP00000345793"/>
<dbReference type="PeptideAtlas" id="Q9UGR2"/>
<dbReference type="Pumba" id="Q9UGR2"/>
<dbReference type="Antibodypedia" id="203">
    <property type="antibodies" value="116 antibodies from 27 providers"/>
</dbReference>
<dbReference type="DNASU" id="23264"/>
<dbReference type="Ensembl" id="ENST00000352645.5">
    <property type="protein sequence ID" value="ENSP00000345793.4"/>
    <property type="gene ID" value="ENSG00000100403.12"/>
</dbReference>
<dbReference type="GeneID" id="23264"/>
<dbReference type="KEGG" id="hsa:23264"/>
<dbReference type="MANE-Select" id="ENST00000352645.5">
    <property type="protein sequence ID" value="ENSP00000345793.4"/>
    <property type="RefSeq nucleotide sequence ID" value="NM_017590.6"/>
    <property type="RefSeq protein sequence ID" value="NP_060060.3"/>
</dbReference>
<dbReference type="UCSC" id="uc003azw.5">
    <property type="organism name" value="human"/>
</dbReference>
<dbReference type="AGR" id="HGNC:30869"/>
<dbReference type="CTD" id="23264"/>
<dbReference type="DisGeNET" id="23264"/>
<dbReference type="GeneCards" id="ZC3H7B"/>
<dbReference type="HGNC" id="HGNC:30869">
    <property type="gene designation" value="ZC3H7B"/>
</dbReference>
<dbReference type="HPA" id="ENSG00000100403">
    <property type="expression patterns" value="Low tissue specificity"/>
</dbReference>
<dbReference type="MIM" id="618206">
    <property type="type" value="gene"/>
</dbReference>
<dbReference type="neXtProt" id="NX_Q9UGR2"/>
<dbReference type="OpenTargets" id="ENSG00000100403"/>
<dbReference type="PharmGKB" id="PA142670533"/>
<dbReference type="VEuPathDB" id="HostDB:ENSG00000100403"/>
<dbReference type="eggNOG" id="ENOG502QVIS">
    <property type="taxonomic scope" value="Eukaryota"/>
</dbReference>
<dbReference type="GeneTree" id="ENSGT00390000018542"/>
<dbReference type="HOGENOM" id="CLU_012672_0_0_1"/>
<dbReference type="InParanoid" id="Q9UGR2"/>
<dbReference type="OMA" id="RAMSFIQ"/>
<dbReference type="OrthoDB" id="433738at2759"/>
<dbReference type="PAN-GO" id="Q9UGR2">
    <property type="GO annotations" value="2 GO annotations based on evolutionary models"/>
</dbReference>
<dbReference type="PhylomeDB" id="Q9UGR2"/>
<dbReference type="TreeFam" id="TF329017"/>
<dbReference type="PathwayCommons" id="Q9UGR2"/>
<dbReference type="SignaLink" id="Q9UGR2"/>
<dbReference type="BioGRID-ORCS" id="23264">
    <property type="hits" value="11 hits in 1156 CRISPR screens"/>
</dbReference>
<dbReference type="CD-CODE" id="232F8A39">
    <property type="entry name" value="P-body"/>
</dbReference>
<dbReference type="CD-CODE" id="DEE660B4">
    <property type="entry name" value="Stress granule"/>
</dbReference>
<dbReference type="ChiTaRS" id="ZC3H7B">
    <property type="organism name" value="human"/>
</dbReference>
<dbReference type="GeneWiki" id="Roxan_(protein)"/>
<dbReference type="GenomeRNAi" id="23264"/>
<dbReference type="Pharos" id="Q9UGR2">
    <property type="development level" value="Tbio"/>
</dbReference>
<dbReference type="PRO" id="PR:Q9UGR2"/>
<dbReference type="Proteomes" id="UP000005640">
    <property type="component" value="Chromosome 22"/>
</dbReference>
<dbReference type="RNAct" id="Q9UGR2">
    <property type="molecule type" value="protein"/>
</dbReference>
<dbReference type="Bgee" id="ENSG00000100403">
    <property type="expression patterns" value="Expressed in endothelial cell and 204 other cell types or tissues"/>
</dbReference>
<dbReference type="GO" id="GO:0005634">
    <property type="term" value="C:nucleus"/>
    <property type="evidence" value="ECO:0007669"/>
    <property type="project" value="UniProtKB-SubCell"/>
</dbReference>
<dbReference type="GO" id="GO:0035198">
    <property type="term" value="F:miRNA binding"/>
    <property type="evidence" value="ECO:0000314"/>
    <property type="project" value="UniProtKB"/>
</dbReference>
<dbReference type="GO" id="GO:0003723">
    <property type="term" value="F:RNA binding"/>
    <property type="evidence" value="ECO:0007005"/>
    <property type="project" value="UniProtKB"/>
</dbReference>
<dbReference type="GO" id="GO:0008270">
    <property type="term" value="F:zinc ion binding"/>
    <property type="evidence" value="ECO:0007669"/>
    <property type="project" value="UniProtKB-KW"/>
</dbReference>
<dbReference type="GO" id="GO:0035196">
    <property type="term" value="P:miRNA processing"/>
    <property type="evidence" value="ECO:0000315"/>
    <property type="project" value="UniProtKB"/>
</dbReference>
<dbReference type="GO" id="GO:0010608">
    <property type="term" value="P:post-transcriptional regulation of gene expression"/>
    <property type="evidence" value="ECO:0000315"/>
    <property type="project" value="UniProtKB"/>
</dbReference>
<dbReference type="FunFam" id="1.25.40.10:FF:000070">
    <property type="entry name" value="zinc finger CCCH domain-containing protein 7B"/>
    <property type="match status" value="1"/>
</dbReference>
<dbReference type="Gene3D" id="3.30.160.60">
    <property type="entry name" value="Classic Zinc Finger"/>
    <property type="match status" value="1"/>
</dbReference>
<dbReference type="Gene3D" id="1.25.40.10">
    <property type="entry name" value="Tetratricopeptide repeat domain"/>
    <property type="match status" value="1"/>
</dbReference>
<dbReference type="InterPro" id="IPR011990">
    <property type="entry name" value="TPR-like_helical_dom_sf"/>
</dbReference>
<dbReference type="InterPro" id="IPR019734">
    <property type="entry name" value="TPR_rpt"/>
</dbReference>
<dbReference type="InterPro" id="IPR039691">
    <property type="entry name" value="ZC3H7A/B"/>
</dbReference>
<dbReference type="InterPro" id="IPR036236">
    <property type="entry name" value="Znf_C2H2_sf"/>
</dbReference>
<dbReference type="InterPro" id="IPR000571">
    <property type="entry name" value="Znf_CCCH"/>
</dbReference>
<dbReference type="InterPro" id="IPR036855">
    <property type="entry name" value="Znf_CCCH_sf"/>
</dbReference>
<dbReference type="PANTHER" id="PTHR14928">
    <property type="entry name" value="MICRO-RNA BINDING ZINC FINGER CCCH DOMAIN-CONTAINING PROTEIN 7"/>
    <property type="match status" value="1"/>
</dbReference>
<dbReference type="PANTHER" id="PTHR14928:SF6">
    <property type="entry name" value="ZINC FINGER CCCH DOMAIN-CONTAINING PROTEIN 7B"/>
    <property type="match status" value="1"/>
</dbReference>
<dbReference type="Pfam" id="PF13181">
    <property type="entry name" value="TPR_8"/>
    <property type="match status" value="1"/>
</dbReference>
<dbReference type="Pfam" id="PF00642">
    <property type="entry name" value="zf-CCCH"/>
    <property type="match status" value="1"/>
</dbReference>
<dbReference type="SMART" id="SM00028">
    <property type="entry name" value="TPR"/>
    <property type="match status" value="2"/>
</dbReference>
<dbReference type="SMART" id="SM00356">
    <property type="entry name" value="ZnF_C3H1"/>
    <property type="match status" value="4"/>
</dbReference>
<dbReference type="SUPFAM" id="SSF57667">
    <property type="entry name" value="beta-beta-alpha zinc fingers"/>
    <property type="match status" value="1"/>
</dbReference>
<dbReference type="SUPFAM" id="SSF90229">
    <property type="entry name" value="CCCH zinc finger"/>
    <property type="match status" value="2"/>
</dbReference>
<dbReference type="SUPFAM" id="SSF48452">
    <property type="entry name" value="TPR-like"/>
    <property type="match status" value="1"/>
</dbReference>
<dbReference type="PROSITE" id="PS50005">
    <property type="entry name" value="TPR"/>
    <property type="match status" value="2"/>
</dbReference>
<dbReference type="PROSITE" id="PS50293">
    <property type="entry name" value="TPR_REGION"/>
    <property type="match status" value="1"/>
</dbReference>
<dbReference type="PROSITE" id="PS50103">
    <property type="entry name" value="ZF_C3H1"/>
    <property type="match status" value="4"/>
</dbReference>
<feature type="chain" id="PRO_0000106322" description="Zinc finger CCCH domain-containing protein 7B">
    <location>
        <begin position="1"/>
        <end position="977"/>
    </location>
</feature>
<feature type="repeat" description="TPR 1" evidence="1">
    <location>
        <begin position="1"/>
        <end position="27"/>
    </location>
</feature>
<feature type="repeat" description="TPR 2" evidence="3">
    <location>
        <begin position="36"/>
        <end position="69"/>
    </location>
</feature>
<feature type="repeat" description="TPR 3" evidence="3">
    <location>
        <begin position="82"/>
        <end position="115"/>
    </location>
</feature>
<feature type="zinc finger region" description="C3H1-type 1" evidence="4">
    <location>
        <begin position="484"/>
        <end position="508"/>
    </location>
</feature>
<feature type="zinc finger region" description="C3H1-type 2" evidence="4">
    <location>
        <begin position="616"/>
        <end position="638"/>
    </location>
</feature>
<feature type="zinc finger region" description="C3H1-type 3" evidence="4">
    <location>
        <begin position="754"/>
        <end position="782"/>
    </location>
</feature>
<feature type="zinc finger region" description="C2H2-type" evidence="2">
    <location>
        <begin position="842"/>
        <end position="866"/>
    </location>
</feature>
<feature type="zinc finger region" description="C3H1-type 4" evidence="4">
    <location>
        <begin position="886"/>
        <end position="914"/>
    </location>
</feature>
<feature type="region of interest" description="Disordered" evidence="5">
    <location>
        <begin position="365"/>
        <end position="403"/>
    </location>
</feature>
<feature type="short sequence motif" description="LD motif; interaction with NSP3">
    <location>
        <begin position="248"/>
        <end position="256"/>
    </location>
</feature>
<feature type="modified residue" description="Phosphoserine" evidence="11 12">
    <location>
        <position position="217"/>
    </location>
</feature>
<feature type="modified residue" description="Phosphoserine" evidence="13 14">
    <location>
        <position position="364"/>
    </location>
</feature>
<feature type="modified residue" description="Phosphoserine" evidence="13">
    <location>
        <position position="367"/>
    </location>
</feature>
<feature type="sequence variant" id="VAR_054313" description="In dbSNP:rs9607793.">
    <original>D</original>
    <variation>N</variation>
    <location>
        <position position="363"/>
    </location>
</feature>
<feature type="mutagenesis site" description="Almost no effect on NSP3 binding." evidence="6">
    <original>DSS</original>
    <variation>AAA</variation>
    <location>
        <begin position="241"/>
        <end position="243"/>
    </location>
</feature>
<feature type="mutagenesis site" description="Complete loss of NSP3 binding." evidence="6">
    <original>LDD</original>
    <variation>AAA</variation>
    <location>
        <begin position="252"/>
        <end position="254"/>
    </location>
</feature>
<feature type="sequence conflict" description="In Ref. 5; BAA82983." evidence="10" ref="5">
    <original>NL</original>
    <variation>LE</variation>
    <location>
        <begin position="38"/>
        <end position="39"/>
    </location>
</feature>
<feature type="sequence conflict" description="In Ref. 4; AAF05541." evidence="10" ref="4">
    <original>R</original>
    <variation>K</variation>
    <location>
        <position position="88"/>
    </location>
</feature>
<feature type="sequence conflict" description="In Ref. 4; AAF05541." evidence="10" ref="4">
    <original>G</original>
    <variation>A</variation>
    <location>
        <position position="216"/>
    </location>
</feature>
<feature type="sequence conflict" description="In Ref. 3; AAI52559." evidence="10" ref="3">
    <original>P</original>
    <variation>T</variation>
    <location>
        <position position="231"/>
    </location>
</feature>
<feature type="sequence conflict" description="In Ref. 4; AAF05541." evidence="10" ref="4">
    <original>G</original>
    <variation>V</variation>
    <location>
        <position position="370"/>
    </location>
</feature>
<feature type="sequence conflict" description="In Ref. 3; AAI52559." evidence="10" ref="3">
    <original>P</original>
    <variation>T</variation>
    <location>
        <position position="390"/>
    </location>
</feature>
<feature type="sequence conflict" description="In Ref. 4; AAF05541." evidence="10" ref="4">
    <original>S</original>
    <variation>F</variation>
    <location>
        <position position="660"/>
    </location>
</feature>
<feature type="sequence conflict" description="In Ref. 3; AAI52559." evidence="10" ref="3">
    <original>P</original>
    <variation>L</variation>
    <location>
        <position position="902"/>
    </location>
</feature>
<feature type="sequence conflict" description="In Ref. 1; BAG37501 and 3; AAI52559." evidence="10" ref="1 3">
    <original>E</original>
    <variation>G</variation>
    <location>
        <position position="955"/>
    </location>
</feature>
<gene>
    <name type="primary">ZC3H7B</name>
    <name type="synonym">KIAA1031</name>
</gene>
<name>Z3H7B_HUMAN</name>